<proteinExistence type="inferred from homology"/>
<keyword id="KW-0067">ATP-binding</keyword>
<keyword id="KW-0997">Cell inner membrane</keyword>
<keyword id="KW-1003">Cell membrane</keyword>
<keyword id="KW-0472">Membrane</keyword>
<keyword id="KW-0547">Nucleotide-binding</keyword>
<keyword id="KW-1278">Translocase</keyword>
<keyword id="KW-0813">Transport</keyword>
<accession>O69063</accession>
<comment type="function">
    <text evidence="4 5">Part of the ABC transporter complex HtxBCDE involved in hypophosphite import. Responsible for energy coupling to the transport system (Probable).</text>
</comment>
<comment type="catalytic activity">
    <reaction>
        <text>phosphinate(out) + ATP + H2O = phosphinate(in) + ADP + phosphate + H(+)</text>
        <dbReference type="Rhea" id="RHEA:48512"/>
        <dbReference type="ChEBI" id="CHEBI:15377"/>
        <dbReference type="ChEBI" id="CHEBI:15378"/>
        <dbReference type="ChEBI" id="CHEBI:29198"/>
        <dbReference type="ChEBI" id="CHEBI:30616"/>
        <dbReference type="ChEBI" id="CHEBI:43474"/>
        <dbReference type="ChEBI" id="CHEBI:456216"/>
    </reaction>
</comment>
<comment type="subunit">
    <text evidence="3">The complex is composed of two ATP-binding proteins (HtxD), two transmembrane proteins (HtxC and HtxE) and a solute-binding protein (HtxB).</text>
</comment>
<comment type="subcellular location">
    <subcellularLocation>
        <location evidence="1">Cell inner membrane</location>
        <topology evidence="1">Peripheral membrane protein</topology>
    </subcellularLocation>
</comment>
<comment type="similarity">
    <text evidence="3">Belongs to the ABC transporter superfamily. Phosphonates importer (TC 3.A.1.9.1) family.</text>
</comment>
<organism>
    <name type="scientific">Stutzerimonas stutzeri</name>
    <name type="common">Pseudomonas stutzeri</name>
    <dbReference type="NCBI Taxonomy" id="316"/>
    <lineage>
        <taxon>Bacteria</taxon>
        <taxon>Pseudomonadati</taxon>
        <taxon>Pseudomonadota</taxon>
        <taxon>Gammaproteobacteria</taxon>
        <taxon>Pseudomonadales</taxon>
        <taxon>Pseudomonadaceae</taxon>
        <taxon>Stutzerimonas</taxon>
    </lineage>
</organism>
<sequence length="341" mass="37310">MKDVALQLKNVGKSYGNKVVLESIDFEVRHGSMVALLGTSGAGKSTLFRCLTGLEPIDSGSIVALGESIHELSPARLRAVRGQIGFVFQQLHLVKRFSALENVLGARLAEMPIWRVTLKSFSRADKVLAFECLDRVGMLDYANTPTQLLSGGQQQRIAIARALAQKPKIIIADEPVSSLDPLTARSVLQTLKAAATDLNVAVLCSLHQVDLAREFGDRIVGMRDGRVVFDGTPAEFTDERVHALYQVPAGKMHQRPRATRSTRWPVWLWHEGRSDDHIHTPHTRAAPGHRTALAPERALQRQTSAGADRRHGAVVRDRTTHRNGPHGGHDGTGRGQDRGPG</sequence>
<protein>
    <recommendedName>
        <fullName>Hypophosphite import ATP-binding protein HtxD</fullName>
        <ecNumber>7.6.2.-</ecNumber>
    </recommendedName>
</protein>
<feature type="chain" id="PRO_0000092393" description="Hypophosphite import ATP-binding protein HtxD">
    <location>
        <begin position="1"/>
        <end position="341"/>
    </location>
</feature>
<feature type="domain" description="ABC transporter">
    <location>
        <begin position="6"/>
        <end position="249"/>
    </location>
</feature>
<feature type="region of interest" description="Disordered" evidence="2">
    <location>
        <begin position="278"/>
        <end position="341"/>
    </location>
</feature>
<feature type="compositionally biased region" description="Basic and acidic residues" evidence="2">
    <location>
        <begin position="307"/>
        <end position="320"/>
    </location>
</feature>
<feature type="compositionally biased region" description="Basic and acidic residues" evidence="2">
    <location>
        <begin position="327"/>
        <end position="341"/>
    </location>
</feature>
<feature type="binding site" evidence="1">
    <location>
        <begin position="38"/>
        <end position="45"/>
    </location>
    <ligand>
        <name>ATP</name>
        <dbReference type="ChEBI" id="CHEBI:30616"/>
    </ligand>
</feature>
<name>HTXD_STUST</name>
<dbReference type="EC" id="7.6.2.-"/>
<dbReference type="EMBL" id="AF061267">
    <property type="protein sequence ID" value="AAC71714.1"/>
    <property type="molecule type" value="Genomic_DNA"/>
</dbReference>
<dbReference type="SMR" id="O69063"/>
<dbReference type="TCDB" id="3.A.1.9.4">
    <property type="family name" value="the atp-binding cassette (abc) superfamily"/>
</dbReference>
<dbReference type="GO" id="GO:0005886">
    <property type="term" value="C:plasma membrane"/>
    <property type="evidence" value="ECO:0007669"/>
    <property type="project" value="UniProtKB-SubCell"/>
</dbReference>
<dbReference type="GO" id="GO:0015416">
    <property type="term" value="F:ABC-type phosphonate transporter activity"/>
    <property type="evidence" value="ECO:0007669"/>
    <property type="project" value="InterPro"/>
</dbReference>
<dbReference type="GO" id="GO:0005524">
    <property type="term" value="F:ATP binding"/>
    <property type="evidence" value="ECO:0007669"/>
    <property type="project" value="UniProtKB-KW"/>
</dbReference>
<dbReference type="GO" id="GO:0016887">
    <property type="term" value="F:ATP hydrolysis activity"/>
    <property type="evidence" value="ECO:0007669"/>
    <property type="project" value="InterPro"/>
</dbReference>
<dbReference type="CDD" id="cd03256">
    <property type="entry name" value="ABC_PhnC_transporter"/>
    <property type="match status" value="1"/>
</dbReference>
<dbReference type="Gene3D" id="3.40.50.300">
    <property type="entry name" value="P-loop containing nucleotide triphosphate hydrolases"/>
    <property type="match status" value="1"/>
</dbReference>
<dbReference type="InterPro" id="IPR003593">
    <property type="entry name" value="AAA+_ATPase"/>
</dbReference>
<dbReference type="InterPro" id="IPR003439">
    <property type="entry name" value="ABC_transporter-like_ATP-bd"/>
</dbReference>
<dbReference type="InterPro" id="IPR017871">
    <property type="entry name" value="ABC_transporter-like_CS"/>
</dbReference>
<dbReference type="InterPro" id="IPR012693">
    <property type="entry name" value="ABC_transpr_PhnC"/>
</dbReference>
<dbReference type="InterPro" id="IPR050086">
    <property type="entry name" value="MetN_ABC_transporter-like"/>
</dbReference>
<dbReference type="InterPro" id="IPR027417">
    <property type="entry name" value="P-loop_NTPase"/>
</dbReference>
<dbReference type="NCBIfam" id="TIGR02315">
    <property type="entry name" value="ABC_phnC"/>
    <property type="match status" value="1"/>
</dbReference>
<dbReference type="PANTHER" id="PTHR43166">
    <property type="entry name" value="AMINO ACID IMPORT ATP-BINDING PROTEIN"/>
    <property type="match status" value="1"/>
</dbReference>
<dbReference type="PANTHER" id="PTHR43166:SF6">
    <property type="entry name" value="PHOSPHONATES IMPORT ATP-BINDING PROTEIN PHNC"/>
    <property type="match status" value="1"/>
</dbReference>
<dbReference type="Pfam" id="PF00005">
    <property type="entry name" value="ABC_tran"/>
    <property type="match status" value="1"/>
</dbReference>
<dbReference type="SMART" id="SM00382">
    <property type="entry name" value="AAA"/>
    <property type="match status" value="1"/>
</dbReference>
<dbReference type="SUPFAM" id="SSF52540">
    <property type="entry name" value="P-loop containing nucleoside triphosphate hydrolases"/>
    <property type="match status" value="1"/>
</dbReference>
<dbReference type="PROSITE" id="PS00211">
    <property type="entry name" value="ABC_TRANSPORTER_1"/>
    <property type="match status" value="1"/>
</dbReference>
<dbReference type="PROSITE" id="PS50893">
    <property type="entry name" value="ABC_TRANSPORTER_2"/>
    <property type="match status" value="1"/>
</dbReference>
<dbReference type="PROSITE" id="PS51249">
    <property type="entry name" value="PHNC"/>
    <property type="match status" value="1"/>
</dbReference>
<reference key="1">
    <citation type="journal article" date="1998" name="J. Bacteriol.">
        <title>Molecular genetic analysis of phosphite and hypophosphite oxidation by Pseudomonas stutzeri WM88.</title>
        <authorList>
            <person name="Metcalf W.W."/>
            <person name="Wolfe R.S."/>
        </authorList>
    </citation>
    <scope>NUCLEOTIDE SEQUENCE [GENOMIC DNA]</scope>
    <scope>FUNCTION</scope>
    <source>
        <strain>WM88</strain>
    </source>
</reference>
<reference key="2">
    <citation type="journal article" date="2004" name="J. Bacteriol.">
        <title>Two C-P lyase operons in Pseudomonas stutzeri and their roles in the oxidation of phosphonates, phosphite, and hypophosphite.</title>
        <authorList>
            <person name="White A.K."/>
            <person name="Metcalf W.W."/>
        </authorList>
    </citation>
    <scope>FUNCTION</scope>
    <source>
        <strain>WM88</strain>
    </source>
</reference>
<gene>
    <name type="primary">htxD</name>
</gene>
<evidence type="ECO:0000250" key="1"/>
<evidence type="ECO:0000256" key="2">
    <source>
        <dbReference type="SAM" id="MobiDB-lite"/>
    </source>
</evidence>
<evidence type="ECO:0000305" key="3"/>
<evidence type="ECO:0000305" key="4">
    <source>
    </source>
</evidence>
<evidence type="ECO:0000305" key="5">
    <source>
    </source>
</evidence>